<gene>
    <name type="primary">Sel1l</name>
    <name type="synonym">Sel1h</name>
</gene>
<comment type="function">
    <text evidence="3">Plays a role in the endoplasmic reticulum quality control (ERQC) system also called ER-associated degradation (ERAD) involved in ubiquitin-dependent degradation of misfolded endoplasmic reticulum proteins. Enhances SYVN1 stability. Plays a role in LPL maturation and secretion. Required for normal differentiation of the pancreas epithelium, and for normal exocrine function and survival of pancreatic cells. May play a role in Notch signaling.</text>
</comment>
<comment type="subunit">
    <text evidence="2 3">Homodimer and homooligomer (By similarity). May form a complex with ERLEC1, HSPA5, OS9, and SYVN1 (By similarity). Interacts with FOXRED2 and EDEM1 (By similarity). Interacts with LPL and LMF1; may stabilize the complex formed by LPL and LMF1 and thereby promote the export of LPL dimers (By similarity). Component of the HRD1 complex, which comprises at least SYNV1/HRD1, DERL1/2, FAM8A1, HERPUD1/HERP, OS9, SEL1L and UBE2J1 (By similarity). SYNV1 assembles with SEL1L and FAM8A1 through its transmembrane domains, but interaction with its cytoplasmic domain is required to confer stability to FAM8A1 and enhance recruitment of HERPUD1 (By similarity). The interaction with SYNV1/HRD1 is direct (By similarity).</text>
</comment>
<comment type="subcellular location">
    <subcellularLocation>
        <location evidence="2">Endoplasmic reticulum membrane</location>
        <topology evidence="2">Single-pass type I membrane protein</topology>
    </subcellularLocation>
</comment>
<comment type="PTM">
    <text evidence="2">N-glycosylated.</text>
</comment>
<comment type="similarity">
    <text evidence="7">Belongs to the sel-1 family.</text>
</comment>
<proteinExistence type="evidence at transcript level"/>
<keyword id="KW-1015">Disulfide bond</keyword>
<keyword id="KW-0256">Endoplasmic reticulum</keyword>
<keyword id="KW-0325">Glycoprotein</keyword>
<keyword id="KW-0472">Membrane</keyword>
<keyword id="KW-0914">Notch signaling pathway</keyword>
<keyword id="KW-0597">Phosphoprotein</keyword>
<keyword id="KW-1185">Reference proteome</keyword>
<keyword id="KW-0677">Repeat</keyword>
<keyword id="KW-0732">Signal</keyword>
<keyword id="KW-0812">Transmembrane</keyword>
<keyword id="KW-1133">Transmembrane helix</keyword>
<accession>Q9ESM7</accession>
<name>SE1L1_MESAU</name>
<feature type="signal peptide" evidence="4">
    <location>
        <begin position="1"/>
        <end position="21"/>
    </location>
</feature>
<feature type="chain" id="PRO_0000022295" description="Protein sel-1 homolog 1">
    <location>
        <begin position="22"/>
        <end position="794"/>
    </location>
</feature>
<feature type="topological domain" description="Lumenal" evidence="4">
    <location>
        <begin position="22"/>
        <end position="738"/>
    </location>
</feature>
<feature type="transmembrane region" description="Helical" evidence="4">
    <location>
        <begin position="739"/>
        <end position="759"/>
    </location>
</feature>
<feature type="topological domain" description="Cytoplasmic" evidence="4">
    <location>
        <begin position="760"/>
        <end position="794"/>
    </location>
</feature>
<feature type="domain" description="Fibronectin type-II" evidence="5">
    <location>
        <begin position="122"/>
        <end position="170"/>
    </location>
</feature>
<feature type="repeat" description="Sel1-like 1">
    <location>
        <begin position="183"/>
        <end position="218"/>
    </location>
</feature>
<feature type="repeat" description="Sel1-like 2">
    <location>
        <begin position="219"/>
        <end position="254"/>
    </location>
</feature>
<feature type="repeat" description="Sel1-like 3">
    <location>
        <begin position="255"/>
        <end position="290"/>
    </location>
</feature>
<feature type="repeat" description="Sel1-like 4">
    <location>
        <begin position="291"/>
        <end position="326"/>
    </location>
</feature>
<feature type="repeat" description="Sel1-like 5">
    <location>
        <begin position="373"/>
        <end position="409"/>
    </location>
</feature>
<feature type="repeat" description="Sel1-like 6">
    <location>
        <begin position="410"/>
        <end position="446"/>
    </location>
</feature>
<feature type="repeat" description="Sel1-like 7">
    <location>
        <begin position="447"/>
        <end position="482"/>
    </location>
</feature>
<feature type="repeat" description="Sel1-like 8">
    <location>
        <begin position="483"/>
        <end position="518"/>
    </location>
</feature>
<feature type="repeat" description="Sel1-like 9">
    <location>
        <begin position="519"/>
        <end position="554"/>
    </location>
</feature>
<feature type="repeat" description="Sel1-like 10">
    <location>
        <begin position="627"/>
        <end position="662"/>
    </location>
</feature>
<feature type="repeat" description="Sel1-like 11">
    <location>
        <begin position="664"/>
        <end position="699"/>
    </location>
</feature>
<feature type="region of interest" description="Disordered" evidence="6">
    <location>
        <begin position="20"/>
        <end position="91"/>
    </location>
</feature>
<feature type="region of interest" description="Interaction with ERLEC1, OS9 and SYVN1" evidence="1">
    <location>
        <begin position="22"/>
        <end position="737"/>
    </location>
</feature>
<feature type="region of interest" description="Important for homodimerization and oligomerization" evidence="3">
    <location>
        <begin position="352"/>
        <end position="537"/>
    </location>
</feature>
<feature type="region of interest" description="Interaction with SYVN1" evidence="3">
    <location>
        <begin position="643"/>
        <end position="723"/>
    </location>
</feature>
<feature type="region of interest" description="Mediates retention in the endoplasmic reticulum" evidence="1">
    <location>
        <begin position="738"/>
        <end position="794"/>
    </location>
</feature>
<feature type="region of interest" description="Disordered" evidence="6">
    <location>
        <begin position="768"/>
        <end position="794"/>
    </location>
</feature>
<feature type="compositionally biased region" description="Acidic residues" evidence="6">
    <location>
        <begin position="23"/>
        <end position="32"/>
    </location>
</feature>
<feature type="compositionally biased region" description="Acidic residues" evidence="6">
    <location>
        <begin position="62"/>
        <end position="77"/>
    </location>
</feature>
<feature type="compositionally biased region" description="Pro residues" evidence="6">
    <location>
        <begin position="771"/>
        <end position="794"/>
    </location>
</feature>
<feature type="modified residue" description="Phosphoserine" evidence="2">
    <location>
        <position position="63"/>
    </location>
</feature>
<feature type="glycosylation site" description="N-linked (GlcNAc...) asparagine" evidence="4">
    <location>
        <position position="195"/>
    </location>
</feature>
<feature type="glycosylation site" description="N-linked (GlcNAc...) asparagine" evidence="4">
    <location>
        <position position="217"/>
    </location>
</feature>
<feature type="glycosylation site" description="N-linked (GlcNAc...) asparagine" evidence="4">
    <location>
        <position position="272"/>
    </location>
</feature>
<feature type="glycosylation site" description="N-linked (GlcNAc...) asparagine" evidence="4">
    <location>
        <position position="431"/>
    </location>
</feature>
<feature type="glycosylation site" description="N-linked (GlcNAc...) asparagine" evidence="4">
    <location>
        <position position="608"/>
    </location>
</feature>
<feature type="disulfide bond" evidence="5">
    <location>
        <begin position="127"/>
        <end position="153"/>
    </location>
</feature>
<feature type="disulfide bond" evidence="5">
    <location>
        <begin position="141"/>
        <end position="168"/>
    </location>
</feature>
<dbReference type="EMBL" id="AB048195">
    <property type="protein sequence ID" value="BAB12403.1"/>
    <property type="molecule type" value="mRNA"/>
</dbReference>
<dbReference type="RefSeq" id="NP_001268291.1">
    <property type="nucleotide sequence ID" value="NM_001281362.1"/>
</dbReference>
<dbReference type="SMR" id="Q9ESM7"/>
<dbReference type="STRING" id="10036.ENSMAUP00000015080"/>
<dbReference type="GlyCosmos" id="Q9ESM7">
    <property type="glycosylation" value="5 sites, No reported glycans"/>
</dbReference>
<dbReference type="GeneID" id="101834260"/>
<dbReference type="KEGG" id="maua:101834260"/>
<dbReference type="CTD" id="6400"/>
<dbReference type="eggNOG" id="KOG1550">
    <property type="taxonomic scope" value="Eukaryota"/>
</dbReference>
<dbReference type="OrthoDB" id="27934at2759"/>
<dbReference type="Proteomes" id="UP000189706">
    <property type="component" value="Unplaced"/>
</dbReference>
<dbReference type="GO" id="GO:0005783">
    <property type="term" value="C:endoplasmic reticulum"/>
    <property type="evidence" value="ECO:0000250"/>
    <property type="project" value="UniProtKB"/>
</dbReference>
<dbReference type="GO" id="GO:0000839">
    <property type="term" value="C:Hrd1p ubiquitin ligase ERAD-L complex"/>
    <property type="evidence" value="ECO:0000250"/>
    <property type="project" value="UniProtKB"/>
</dbReference>
<dbReference type="GO" id="GO:0036503">
    <property type="term" value="P:ERAD pathway"/>
    <property type="evidence" value="ECO:0000250"/>
    <property type="project" value="UniProtKB"/>
</dbReference>
<dbReference type="GO" id="GO:0007219">
    <property type="term" value="P:Notch signaling pathway"/>
    <property type="evidence" value="ECO:0007669"/>
    <property type="project" value="UniProtKB-KW"/>
</dbReference>
<dbReference type="GO" id="GO:0009306">
    <property type="term" value="P:protein secretion"/>
    <property type="evidence" value="ECO:0000250"/>
    <property type="project" value="UniProtKB"/>
</dbReference>
<dbReference type="GO" id="GO:0006641">
    <property type="term" value="P:triglyceride metabolic process"/>
    <property type="evidence" value="ECO:0000250"/>
    <property type="project" value="UniProtKB"/>
</dbReference>
<dbReference type="CDD" id="cd00062">
    <property type="entry name" value="FN2"/>
    <property type="match status" value="1"/>
</dbReference>
<dbReference type="FunFam" id="2.10.10.10:FF:000001">
    <property type="entry name" value="Fibronectin 1a isoform 1"/>
    <property type="match status" value="1"/>
</dbReference>
<dbReference type="FunFam" id="1.25.40.10:FF:000208">
    <property type="entry name" value="Protein sel-1 homolog 1"/>
    <property type="match status" value="1"/>
</dbReference>
<dbReference type="FunFam" id="1.25.40.10:FF:000193">
    <property type="entry name" value="protein sel-1 homolog 1 isoform X1"/>
    <property type="match status" value="1"/>
</dbReference>
<dbReference type="FunFam" id="1.25.40.10:FF:000200">
    <property type="entry name" value="protein sel-1 homolog 1 precursor"/>
    <property type="match status" value="1"/>
</dbReference>
<dbReference type="Gene3D" id="2.10.10.10">
    <property type="entry name" value="Fibronectin, type II, collagen-binding"/>
    <property type="match status" value="1"/>
</dbReference>
<dbReference type="Gene3D" id="1.25.40.10">
    <property type="entry name" value="Tetratricopeptide repeat domain"/>
    <property type="match status" value="3"/>
</dbReference>
<dbReference type="InterPro" id="IPR000562">
    <property type="entry name" value="FN_type2_dom"/>
</dbReference>
<dbReference type="InterPro" id="IPR036943">
    <property type="entry name" value="FN_type2_sf"/>
</dbReference>
<dbReference type="InterPro" id="IPR013806">
    <property type="entry name" value="Kringle-like"/>
</dbReference>
<dbReference type="InterPro" id="IPR006597">
    <property type="entry name" value="Sel1-like"/>
</dbReference>
<dbReference type="InterPro" id="IPR050767">
    <property type="entry name" value="Sel1_AlgK"/>
</dbReference>
<dbReference type="InterPro" id="IPR011990">
    <property type="entry name" value="TPR-like_helical_dom_sf"/>
</dbReference>
<dbReference type="PANTHER" id="PTHR11102:SF70">
    <property type="entry name" value="PROTEIN SEL-1 HOMOLOG 1"/>
    <property type="match status" value="1"/>
</dbReference>
<dbReference type="PANTHER" id="PTHR11102">
    <property type="entry name" value="SEL-1-LIKE PROTEIN"/>
    <property type="match status" value="1"/>
</dbReference>
<dbReference type="Pfam" id="PF00040">
    <property type="entry name" value="fn2"/>
    <property type="match status" value="1"/>
</dbReference>
<dbReference type="Pfam" id="PF08238">
    <property type="entry name" value="Sel1"/>
    <property type="match status" value="11"/>
</dbReference>
<dbReference type="PRINTS" id="PR00013">
    <property type="entry name" value="FNTYPEII"/>
</dbReference>
<dbReference type="SMART" id="SM00059">
    <property type="entry name" value="FN2"/>
    <property type="match status" value="1"/>
</dbReference>
<dbReference type="SMART" id="SM00671">
    <property type="entry name" value="SEL1"/>
    <property type="match status" value="11"/>
</dbReference>
<dbReference type="SUPFAM" id="SSF81901">
    <property type="entry name" value="HCP-like"/>
    <property type="match status" value="3"/>
</dbReference>
<dbReference type="SUPFAM" id="SSF57440">
    <property type="entry name" value="Kringle-like"/>
    <property type="match status" value="1"/>
</dbReference>
<dbReference type="PROSITE" id="PS00023">
    <property type="entry name" value="FN2_1"/>
    <property type="match status" value="1"/>
</dbReference>
<dbReference type="PROSITE" id="PS51092">
    <property type="entry name" value="FN2_2"/>
    <property type="match status" value="1"/>
</dbReference>
<sequence>MQVHVGLTLLLCAVLLSSATASSDDESNQDESIDSKSSLPADESVKDHSTTGRVVAGQIFVDSEDPEVESPLQEEEESSKTEEEVSVGEEISFVESPSLSSKSYEEAKRARKPVLTAIEGTAHGEPCHFPFLFLDKEYDECTSDGRQDGRLWCATTYDYKTDEKWGFCETEEDAAKRRQMQEAEMIYQAGMKILNGSNRKSQKREAYRYLQKAAGMNHTKALERVSYALLFGDYLTQNIQAAKEMFEKLTEEGSPKGQTALGFLYVSGLGVNSSQAKALVYYTFGALGGNLIAHMVLGYRYWAGIGVLQSCESVLTHYRLVANHVASDISLTGGSVVQRIRLPDEVENPGMNSGMLEEDLIQYYQFLAEKGDVQAQVGLGQLHLHGGRGVEQNHQRAFDYFNLAANAGNSHAMAFLGKMYSEGSDIVPQSNETALHYFKKAADMGNPVGQSGLGMAYLYGRGIQVNYDLALKYFQKAAEQGWVDGQLQLGSMYYNGIGVKRDYKQALKYFNLASQGGHILAFYNLAQMHASGTGVMRSCHTAVELFKNVCERGRWSERLMTAYNSYKDGDYNAAVVQYLLLAEQGYEVAQSNAAFILDQREATIVGENETYPRALLHWNRAASQGYTVARIKLGDYHFYGFGTDVDYETAFIHYRLASEQQHSAQAMFNLGYMHEKGLGIKQDIHLAKRFYDMAAEASPDAQVPVFLALCKLGVVYFLQYIREANIRDIFTQLDMDQLLGPEWDLYLMTIIALLLGTVIAYRQRQHQDVPVPRPPGPWPAPPQQEGPPEQQPPQ</sequence>
<evidence type="ECO:0000250" key="1"/>
<evidence type="ECO:0000250" key="2">
    <source>
        <dbReference type="UniProtKB" id="Q9UBV2"/>
    </source>
</evidence>
<evidence type="ECO:0000250" key="3">
    <source>
        <dbReference type="UniProtKB" id="Q9Z2G6"/>
    </source>
</evidence>
<evidence type="ECO:0000255" key="4"/>
<evidence type="ECO:0000255" key="5">
    <source>
        <dbReference type="PROSITE-ProRule" id="PRU00479"/>
    </source>
</evidence>
<evidence type="ECO:0000256" key="6">
    <source>
        <dbReference type="SAM" id="MobiDB-lite"/>
    </source>
</evidence>
<evidence type="ECO:0000305" key="7"/>
<reference key="1">
    <citation type="submission" date="2000-08" db="EMBL/GenBank/DDBJ databases">
        <title>Hamster kidney SEL1L.</title>
        <authorList>
            <person name="Wada M."/>
            <person name="Moriyama T."/>
        </authorList>
    </citation>
    <scope>NUCLEOTIDE SEQUENCE [MRNA]</scope>
</reference>
<protein>
    <recommendedName>
        <fullName>Protein sel-1 homolog 1</fullName>
    </recommendedName>
    <alternativeName>
        <fullName>Suppressor of lin-12-like protein 1</fullName>
        <shortName>Sel-1L</shortName>
    </alternativeName>
</protein>
<organism>
    <name type="scientific">Mesocricetus auratus</name>
    <name type="common">Golden hamster</name>
    <dbReference type="NCBI Taxonomy" id="10036"/>
    <lineage>
        <taxon>Eukaryota</taxon>
        <taxon>Metazoa</taxon>
        <taxon>Chordata</taxon>
        <taxon>Craniata</taxon>
        <taxon>Vertebrata</taxon>
        <taxon>Euteleostomi</taxon>
        <taxon>Mammalia</taxon>
        <taxon>Eutheria</taxon>
        <taxon>Euarchontoglires</taxon>
        <taxon>Glires</taxon>
        <taxon>Rodentia</taxon>
        <taxon>Myomorpha</taxon>
        <taxon>Muroidea</taxon>
        <taxon>Cricetidae</taxon>
        <taxon>Cricetinae</taxon>
        <taxon>Mesocricetus</taxon>
    </lineage>
</organism>